<feature type="chain" id="PRO_0000380301" description="DNA ligase">
    <location>
        <begin position="1"/>
        <end position="669"/>
    </location>
</feature>
<feature type="domain" description="BRCT" evidence="1">
    <location>
        <begin position="591"/>
        <end position="669"/>
    </location>
</feature>
<feature type="active site" description="N6-AMP-lysine intermediate" evidence="1">
    <location>
        <position position="116"/>
    </location>
</feature>
<feature type="binding site" evidence="1">
    <location>
        <begin position="34"/>
        <end position="38"/>
    </location>
    <ligand>
        <name>NAD(+)</name>
        <dbReference type="ChEBI" id="CHEBI:57540"/>
    </ligand>
</feature>
<feature type="binding site" evidence="1">
    <location>
        <begin position="83"/>
        <end position="84"/>
    </location>
    <ligand>
        <name>NAD(+)</name>
        <dbReference type="ChEBI" id="CHEBI:57540"/>
    </ligand>
</feature>
<feature type="binding site" evidence="1">
    <location>
        <position position="114"/>
    </location>
    <ligand>
        <name>NAD(+)</name>
        <dbReference type="ChEBI" id="CHEBI:57540"/>
    </ligand>
</feature>
<feature type="binding site" evidence="1">
    <location>
        <position position="137"/>
    </location>
    <ligand>
        <name>NAD(+)</name>
        <dbReference type="ChEBI" id="CHEBI:57540"/>
    </ligand>
</feature>
<feature type="binding site" evidence="1">
    <location>
        <position position="171"/>
    </location>
    <ligand>
        <name>NAD(+)</name>
        <dbReference type="ChEBI" id="CHEBI:57540"/>
    </ligand>
</feature>
<feature type="binding site" evidence="1">
    <location>
        <position position="287"/>
    </location>
    <ligand>
        <name>NAD(+)</name>
        <dbReference type="ChEBI" id="CHEBI:57540"/>
    </ligand>
</feature>
<feature type="binding site" evidence="1">
    <location>
        <position position="311"/>
    </location>
    <ligand>
        <name>NAD(+)</name>
        <dbReference type="ChEBI" id="CHEBI:57540"/>
    </ligand>
</feature>
<feature type="binding site" evidence="1">
    <location>
        <position position="405"/>
    </location>
    <ligand>
        <name>Zn(2+)</name>
        <dbReference type="ChEBI" id="CHEBI:29105"/>
    </ligand>
</feature>
<feature type="binding site" evidence="1">
    <location>
        <position position="408"/>
    </location>
    <ligand>
        <name>Zn(2+)</name>
        <dbReference type="ChEBI" id="CHEBI:29105"/>
    </ligand>
</feature>
<feature type="binding site" evidence="1">
    <location>
        <position position="423"/>
    </location>
    <ligand>
        <name>Zn(2+)</name>
        <dbReference type="ChEBI" id="CHEBI:29105"/>
    </ligand>
</feature>
<feature type="binding site" evidence="1">
    <location>
        <position position="428"/>
    </location>
    <ligand>
        <name>Zn(2+)</name>
        <dbReference type="ChEBI" id="CHEBI:29105"/>
    </ligand>
</feature>
<accession>C1EV74</accession>
<reference key="1">
    <citation type="submission" date="2009-02" db="EMBL/GenBank/DDBJ databases">
        <title>Genome sequence of Bacillus cereus 03BB102.</title>
        <authorList>
            <person name="Dodson R.J."/>
            <person name="Jackson P."/>
            <person name="Munk A.C."/>
            <person name="Brettin T."/>
            <person name="Bruce D."/>
            <person name="Detter C."/>
            <person name="Tapia R."/>
            <person name="Han C."/>
            <person name="Sutton G."/>
            <person name="Sims D."/>
        </authorList>
    </citation>
    <scope>NUCLEOTIDE SEQUENCE [LARGE SCALE GENOMIC DNA]</scope>
    <source>
        <strain>03BB102</strain>
    </source>
</reference>
<organism>
    <name type="scientific">Bacillus cereus (strain 03BB102)</name>
    <dbReference type="NCBI Taxonomy" id="572264"/>
    <lineage>
        <taxon>Bacteria</taxon>
        <taxon>Bacillati</taxon>
        <taxon>Bacillota</taxon>
        <taxon>Bacilli</taxon>
        <taxon>Bacillales</taxon>
        <taxon>Bacillaceae</taxon>
        <taxon>Bacillus</taxon>
        <taxon>Bacillus cereus group</taxon>
    </lineage>
</organism>
<keyword id="KW-0227">DNA damage</keyword>
<keyword id="KW-0234">DNA repair</keyword>
<keyword id="KW-0235">DNA replication</keyword>
<keyword id="KW-0436">Ligase</keyword>
<keyword id="KW-0460">Magnesium</keyword>
<keyword id="KW-0464">Manganese</keyword>
<keyword id="KW-0479">Metal-binding</keyword>
<keyword id="KW-0520">NAD</keyword>
<keyword id="KW-0862">Zinc</keyword>
<protein>
    <recommendedName>
        <fullName evidence="1">DNA ligase</fullName>
        <ecNumber evidence="1">6.5.1.2</ecNumber>
    </recommendedName>
    <alternativeName>
        <fullName evidence="1">Polydeoxyribonucleotide synthase [NAD(+)]</fullName>
    </alternativeName>
</protein>
<dbReference type="EC" id="6.5.1.2" evidence="1"/>
<dbReference type="EMBL" id="CP001407">
    <property type="protein sequence ID" value="ACO29872.1"/>
    <property type="molecule type" value="Genomic_DNA"/>
</dbReference>
<dbReference type="RefSeq" id="WP_000031442.1">
    <property type="nucleotide sequence ID" value="NZ_CP009318.1"/>
</dbReference>
<dbReference type="SMR" id="C1EV74"/>
<dbReference type="KEGG" id="bcx:BCA_0379"/>
<dbReference type="PATRIC" id="fig|572264.18.peg.368"/>
<dbReference type="Proteomes" id="UP000002210">
    <property type="component" value="Chromosome"/>
</dbReference>
<dbReference type="GO" id="GO:0005829">
    <property type="term" value="C:cytosol"/>
    <property type="evidence" value="ECO:0007669"/>
    <property type="project" value="TreeGrafter"/>
</dbReference>
<dbReference type="GO" id="GO:0003677">
    <property type="term" value="F:DNA binding"/>
    <property type="evidence" value="ECO:0007669"/>
    <property type="project" value="InterPro"/>
</dbReference>
<dbReference type="GO" id="GO:0003911">
    <property type="term" value="F:DNA ligase (NAD+) activity"/>
    <property type="evidence" value="ECO:0007669"/>
    <property type="project" value="UniProtKB-UniRule"/>
</dbReference>
<dbReference type="GO" id="GO:0046872">
    <property type="term" value="F:metal ion binding"/>
    <property type="evidence" value="ECO:0007669"/>
    <property type="project" value="UniProtKB-KW"/>
</dbReference>
<dbReference type="GO" id="GO:0006281">
    <property type="term" value="P:DNA repair"/>
    <property type="evidence" value="ECO:0007669"/>
    <property type="project" value="UniProtKB-KW"/>
</dbReference>
<dbReference type="GO" id="GO:0006260">
    <property type="term" value="P:DNA replication"/>
    <property type="evidence" value="ECO:0007669"/>
    <property type="project" value="UniProtKB-KW"/>
</dbReference>
<dbReference type="CDD" id="cd17748">
    <property type="entry name" value="BRCT_DNA_ligase_like"/>
    <property type="match status" value="1"/>
</dbReference>
<dbReference type="CDD" id="cd00114">
    <property type="entry name" value="LIGANc"/>
    <property type="match status" value="1"/>
</dbReference>
<dbReference type="FunFam" id="1.10.150.20:FF:000006">
    <property type="entry name" value="DNA ligase"/>
    <property type="match status" value="1"/>
</dbReference>
<dbReference type="FunFam" id="1.10.150.20:FF:000007">
    <property type="entry name" value="DNA ligase"/>
    <property type="match status" value="1"/>
</dbReference>
<dbReference type="FunFam" id="1.10.287.610:FF:000002">
    <property type="entry name" value="DNA ligase"/>
    <property type="match status" value="1"/>
</dbReference>
<dbReference type="FunFam" id="2.40.50.140:FF:000012">
    <property type="entry name" value="DNA ligase"/>
    <property type="match status" value="1"/>
</dbReference>
<dbReference type="FunFam" id="3.30.470.30:FF:000001">
    <property type="entry name" value="DNA ligase"/>
    <property type="match status" value="1"/>
</dbReference>
<dbReference type="FunFam" id="3.40.50.10190:FF:000026">
    <property type="entry name" value="DNA ligase"/>
    <property type="match status" value="1"/>
</dbReference>
<dbReference type="FunFam" id="6.20.10.30:FF:000002">
    <property type="entry name" value="DNA ligase"/>
    <property type="match status" value="1"/>
</dbReference>
<dbReference type="Gene3D" id="6.20.10.30">
    <property type="match status" value="1"/>
</dbReference>
<dbReference type="Gene3D" id="1.10.150.20">
    <property type="entry name" value="5' to 3' exonuclease, C-terminal subdomain"/>
    <property type="match status" value="2"/>
</dbReference>
<dbReference type="Gene3D" id="3.40.50.10190">
    <property type="entry name" value="BRCT domain"/>
    <property type="match status" value="1"/>
</dbReference>
<dbReference type="Gene3D" id="3.30.470.30">
    <property type="entry name" value="DNA ligase/mRNA capping enzyme"/>
    <property type="match status" value="1"/>
</dbReference>
<dbReference type="Gene3D" id="1.10.287.610">
    <property type="entry name" value="Helix hairpin bin"/>
    <property type="match status" value="1"/>
</dbReference>
<dbReference type="Gene3D" id="2.40.50.140">
    <property type="entry name" value="Nucleic acid-binding proteins"/>
    <property type="match status" value="1"/>
</dbReference>
<dbReference type="HAMAP" id="MF_01588">
    <property type="entry name" value="DNA_ligase_A"/>
    <property type="match status" value="1"/>
</dbReference>
<dbReference type="InterPro" id="IPR001357">
    <property type="entry name" value="BRCT_dom"/>
</dbReference>
<dbReference type="InterPro" id="IPR036420">
    <property type="entry name" value="BRCT_dom_sf"/>
</dbReference>
<dbReference type="InterPro" id="IPR041663">
    <property type="entry name" value="DisA/LigA_HHH"/>
</dbReference>
<dbReference type="InterPro" id="IPR001679">
    <property type="entry name" value="DNA_ligase"/>
</dbReference>
<dbReference type="InterPro" id="IPR018239">
    <property type="entry name" value="DNA_ligase_AS"/>
</dbReference>
<dbReference type="InterPro" id="IPR033136">
    <property type="entry name" value="DNA_ligase_CS"/>
</dbReference>
<dbReference type="InterPro" id="IPR013839">
    <property type="entry name" value="DNAligase_adenylation"/>
</dbReference>
<dbReference type="InterPro" id="IPR013840">
    <property type="entry name" value="DNAligase_N"/>
</dbReference>
<dbReference type="InterPro" id="IPR003583">
    <property type="entry name" value="Hlx-hairpin-Hlx_DNA-bd_motif"/>
</dbReference>
<dbReference type="InterPro" id="IPR012340">
    <property type="entry name" value="NA-bd_OB-fold"/>
</dbReference>
<dbReference type="InterPro" id="IPR004150">
    <property type="entry name" value="NAD_DNA_ligase_OB"/>
</dbReference>
<dbReference type="InterPro" id="IPR010994">
    <property type="entry name" value="RuvA_2-like"/>
</dbReference>
<dbReference type="InterPro" id="IPR004149">
    <property type="entry name" value="Znf_DNAligase_C4"/>
</dbReference>
<dbReference type="NCBIfam" id="TIGR00575">
    <property type="entry name" value="dnlj"/>
    <property type="match status" value="1"/>
</dbReference>
<dbReference type="NCBIfam" id="NF005932">
    <property type="entry name" value="PRK07956.1"/>
    <property type="match status" value="1"/>
</dbReference>
<dbReference type="PANTHER" id="PTHR23389">
    <property type="entry name" value="CHROMOSOME TRANSMISSION FIDELITY FACTOR 18"/>
    <property type="match status" value="1"/>
</dbReference>
<dbReference type="PANTHER" id="PTHR23389:SF9">
    <property type="entry name" value="DNA LIGASE"/>
    <property type="match status" value="1"/>
</dbReference>
<dbReference type="Pfam" id="PF00533">
    <property type="entry name" value="BRCT"/>
    <property type="match status" value="1"/>
</dbReference>
<dbReference type="Pfam" id="PF01653">
    <property type="entry name" value="DNA_ligase_aden"/>
    <property type="match status" value="1"/>
</dbReference>
<dbReference type="Pfam" id="PF03120">
    <property type="entry name" value="DNA_ligase_OB"/>
    <property type="match status" value="1"/>
</dbReference>
<dbReference type="Pfam" id="PF03119">
    <property type="entry name" value="DNA_ligase_ZBD"/>
    <property type="match status" value="1"/>
</dbReference>
<dbReference type="Pfam" id="PF12826">
    <property type="entry name" value="HHH_2"/>
    <property type="match status" value="1"/>
</dbReference>
<dbReference type="Pfam" id="PF14520">
    <property type="entry name" value="HHH_5"/>
    <property type="match status" value="1"/>
</dbReference>
<dbReference type="Pfam" id="PF22745">
    <property type="entry name" value="Nlig-Ia"/>
    <property type="match status" value="1"/>
</dbReference>
<dbReference type="PIRSF" id="PIRSF001604">
    <property type="entry name" value="LigA"/>
    <property type="match status" value="1"/>
</dbReference>
<dbReference type="SMART" id="SM00292">
    <property type="entry name" value="BRCT"/>
    <property type="match status" value="1"/>
</dbReference>
<dbReference type="SMART" id="SM00278">
    <property type="entry name" value="HhH1"/>
    <property type="match status" value="3"/>
</dbReference>
<dbReference type="SMART" id="SM00532">
    <property type="entry name" value="LIGANc"/>
    <property type="match status" value="1"/>
</dbReference>
<dbReference type="SUPFAM" id="SSF52113">
    <property type="entry name" value="BRCT domain"/>
    <property type="match status" value="1"/>
</dbReference>
<dbReference type="SUPFAM" id="SSF56091">
    <property type="entry name" value="DNA ligase/mRNA capping enzyme, catalytic domain"/>
    <property type="match status" value="1"/>
</dbReference>
<dbReference type="SUPFAM" id="SSF50249">
    <property type="entry name" value="Nucleic acid-binding proteins"/>
    <property type="match status" value="1"/>
</dbReference>
<dbReference type="SUPFAM" id="SSF47781">
    <property type="entry name" value="RuvA domain 2-like"/>
    <property type="match status" value="1"/>
</dbReference>
<dbReference type="PROSITE" id="PS50172">
    <property type="entry name" value="BRCT"/>
    <property type="match status" value="1"/>
</dbReference>
<dbReference type="PROSITE" id="PS01055">
    <property type="entry name" value="DNA_LIGASE_N1"/>
    <property type="match status" value="1"/>
</dbReference>
<dbReference type="PROSITE" id="PS01056">
    <property type="entry name" value="DNA_LIGASE_N2"/>
    <property type="match status" value="1"/>
</dbReference>
<evidence type="ECO:0000255" key="1">
    <source>
        <dbReference type="HAMAP-Rule" id="MF_01588"/>
    </source>
</evidence>
<comment type="function">
    <text evidence="1">DNA ligase that catalyzes the formation of phosphodiester linkages between 5'-phosphoryl and 3'-hydroxyl groups in double-stranded DNA using NAD as a coenzyme and as the energy source for the reaction. It is essential for DNA replication and repair of damaged DNA.</text>
</comment>
<comment type="catalytic activity">
    <reaction evidence="1">
        <text>NAD(+) + (deoxyribonucleotide)n-3'-hydroxyl + 5'-phospho-(deoxyribonucleotide)m = (deoxyribonucleotide)n+m + AMP + beta-nicotinamide D-nucleotide.</text>
        <dbReference type="EC" id="6.5.1.2"/>
    </reaction>
</comment>
<comment type="cofactor">
    <cofactor evidence="1">
        <name>Mg(2+)</name>
        <dbReference type="ChEBI" id="CHEBI:18420"/>
    </cofactor>
    <cofactor evidence="1">
        <name>Mn(2+)</name>
        <dbReference type="ChEBI" id="CHEBI:29035"/>
    </cofactor>
</comment>
<comment type="similarity">
    <text evidence="1">Belongs to the NAD-dependent DNA ligase family. LigA subfamily.</text>
</comment>
<sequence>MSKEIAKKRIEELRDLLNTFNYQYHVLDNPSVSDAEYDRNMQELIKLEAENPEFMSEDSPSVRVGGTVLDIFEKVTHKSPMLSLGNAFNEGDLRDFDRRVRQGIDDANVRYICELKIDGLAVSLHYEKGRFIQGATRGDGVTGEDITQNLKTIKAIPLRLNEEVTLEARGEAYMPKRSFVKLNEEKEQNGEDVFANPRNAAAGSIRQLDPKIAAKRNLSMFVYGLANVEEKTIPSHSESLDFLGELGFKTNPNRRTCETIEEVIAYVEEWQEKRPHLDYEIDGIVIKVDDVALQESLGTTAKSPRWAIAYKFPAEEVVTRLTGIELSVGRTGVVTPTAELEPVRVAGTIVRRASLHNEDLIREKDIRIGDYVVVKKAGDIIPEVVNVIFDKRTGEEEEYHMPTHCPACESELVRLEEEVALRCINPTCPAQIREGLIHFVSRNAMNIDGLGERVITQLFDADYIRTFADLYSLTKEQLLQLERFGEKSATNLVQAIENSKENSLERLLFGLGIRHVGAKAARTFAEHFETMDALVKATEEELKAINEIGEKMAQSVVAYFDNEDVLELLQQFKEYGVNMTYKGIKIADLQNVESYFAGKTVVLTGKLEVMGRSEAKKKIEALGGKVTGSVSKSTDLVVAGEAAGSKLAQAEKHNVEVWNEERFLQELNK</sequence>
<proteinExistence type="inferred from homology"/>
<name>DNLJ_BACC3</name>
<gene>
    <name evidence="1" type="primary">ligA</name>
    <name type="ordered locus">BCA_0379</name>
</gene>